<accession>Q9ZCM4</accession>
<evidence type="ECO:0000255" key="1">
    <source>
        <dbReference type="HAMAP-Rule" id="MF_01708"/>
    </source>
</evidence>
<organism>
    <name type="scientific">Rickettsia prowazekii (strain Madrid E)</name>
    <dbReference type="NCBI Taxonomy" id="272947"/>
    <lineage>
        <taxon>Bacteria</taxon>
        <taxon>Pseudomonadati</taxon>
        <taxon>Pseudomonadota</taxon>
        <taxon>Alphaproteobacteria</taxon>
        <taxon>Rickettsiales</taxon>
        <taxon>Rickettsiaceae</taxon>
        <taxon>Rickettsieae</taxon>
        <taxon>Rickettsia</taxon>
        <taxon>typhus group</taxon>
    </lineage>
</organism>
<sequence length="221" mass="24846">MNNIVLILKMISKHYKQGNTIVRVLDGLNLTANEGELIAIIGSSGSGKSTLLHIAGLLDKPTNGQVIIPNIKYKKYHLIRLYYLGFIYQQHHLLKDFTALENVIIPRLIRGLDQKEAIKDATKILDDLGLEKKLYNMPGELSGGEQQRVAIARSLINKPRIILADEPTGNLDPNTTNEVFNLFLKVARKQNTTVIMVTHNHELAHKMDKLYNLKHGLLNIA</sequence>
<comment type="function">
    <text evidence="1">Part of the ABC transporter complex LolCDE involved in the translocation of mature outer membrane-directed lipoproteins, from the inner membrane to the periplasmic chaperone, LolA. Responsible for the formation of the LolA-lipoprotein complex in an ATP-dependent manner.</text>
</comment>
<comment type="subunit">
    <text evidence="1">The complex is composed of two ATP-binding proteins (LolD) and two transmembrane proteins (LolC and LolE).</text>
</comment>
<comment type="subcellular location">
    <subcellularLocation>
        <location evidence="1">Cell inner membrane</location>
        <topology evidence="1">Peripheral membrane protein</topology>
    </subcellularLocation>
</comment>
<comment type="similarity">
    <text evidence="1">Belongs to the ABC transporter superfamily. Lipoprotein translocase (TC 3.A.1.125) family.</text>
</comment>
<protein>
    <recommendedName>
        <fullName evidence="1">Lipoprotein-releasing system ATP-binding protein LolD</fullName>
        <ecNumber evidence="1">7.6.2.-</ecNumber>
    </recommendedName>
</protein>
<keyword id="KW-0067">ATP-binding</keyword>
<keyword id="KW-0997">Cell inner membrane</keyword>
<keyword id="KW-1003">Cell membrane</keyword>
<keyword id="KW-0472">Membrane</keyword>
<keyword id="KW-0547">Nucleotide-binding</keyword>
<keyword id="KW-1185">Reference proteome</keyword>
<keyword id="KW-1278">Translocase</keyword>
<keyword id="KW-0813">Transport</keyword>
<dbReference type="EC" id="7.6.2.-" evidence="1"/>
<dbReference type="EMBL" id="AJ235272">
    <property type="protein sequence ID" value="CAA15136.1"/>
    <property type="molecule type" value="Genomic_DNA"/>
</dbReference>
<dbReference type="PIR" id="F71676">
    <property type="entry name" value="F71676"/>
</dbReference>
<dbReference type="RefSeq" id="NP_221060.1">
    <property type="nucleotide sequence ID" value="NC_000963.1"/>
</dbReference>
<dbReference type="RefSeq" id="WP_004598073.1">
    <property type="nucleotide sequence ID" value="NC_000963.1"/>
</dbReference>
<dbReference type="SMR" id="Q9ZCM4"/>
<dbReference type="STRING" id="272947.gene:17555777"/>
<dbReference type="EnsemblBacteria" id="CAA15136">
    <property type="protein sequence ID" value="CAA15136"/>
    <property type="gene ID" value="CAA15136"/>
</dbReference>
<dbReference type="KEGG" id="rpr:RP700"/>
<dbReference type="PATRIC" id="fig|272947.5.peg.721"/>
<dbReference type="eggNOG" id="COG1136">
    <property type="taxonomic scope" value="Bacteria"/>
</dbReference>
<dbReference type="HOGENOM" id="CLU_000604_1_22_5"/>
<dbReference type="OrthoDB" id="9802264at2"/>
<dbReference type="Proteomes" id="UP000002480">
    <property type="component" value="Chromosome"/>
</dbReference>
<dbReference type="GO" id="GO:0005886">
    <property type="term" value="C:plasma membrane"/>
    <property type="evidence" value="ECO:0007669"/>
    <property type="project" value="UniProtKB-SubCell"/>
</dbReference>
<dbReference type="GO" id="GO:0005524">
    <property type="term" value="F:ATP binding"/>
    <property type="evidence" value="ECO:0007669"/>
    <property type="project" value="UniProtKB-KW"/>
</dbReference>
<dbReference type="GO" id="GO:0016887">
    <property type="term" value="F:ATP hydrolysis activity"/>
    <property type="evidence" value="ECO:0007669"/>
    <property type="project" value="InterPro"/>
</dbReference>
<dbReference type="CDD" id="cd03255">
    <property type="entry name" value="ABC_MJ0796_LolCDE_FtsE"/>
    <property type="match status" value="1"/>
</dbReference>
<dbReference type="FunFam" id="3.40.50.300:FF:000056">
    <property type="entry name" value="Cell division ATP-binding protein FtsE"/>
    <property type="match status" value="1"/>
</dbReference>
<dbReference type="Gene3D" id="3.40.50.300">
    <property type="entry name" value="P-loop containing nucleotide triphosphate hydrolases"/>
    <property type="match status" value="1"/>
</dbReference>
<dbReference type="InterPro" id="IPR003593">
    <property type="entry name" value="AAA+_ATPase"/>
</dbReference>
<dbReference type="InterPro" id="IPR003439">
    <property type="entry name" value="ABC_transporter-like_ATP-bd"/>
</dbReference>
<dbReference type="InterPro" id="IPR017871">
    <property type="entry name" value="ABC_transporter-like_CS"/>
</dbReference>
<dbReference type="InterPro" id="IPR017911">
    <property type="entry name" value="MacB-like_ATP-bd"/>
</dbReference>
<dbReference type="InterPro" id="IPR027417">
    <property type="entry name" value="P-loop_NTPase"/>
</dbReference>
<dbReference type="PANTHER" id="PTHR42798:SF7">
    <property type="entry name" value="ALPHA-D-RIBOSE 1-METHYLPHOSPHONATE 5-TRIPHOSPHATE SYNTHASE SUBUNIT PHNL"/>
    <property type="match status" value="1"/>
</dbReference>
<dbReference type="PANTHER" id="PTHR42798">
    <property type="entry name" value="LIPOPROTEIN-RELEASING SYSTEM ATP-BINDING PROTEIN LOLD"/>
    <property type="match status" value="1"/>
</dbReference>
<dbReference type="Pfam" id="PF00005">
    <property type="entry name" value="ABC_tran"/>
    <property type="match status" value="1"/>
</dbReference>
<dbReference type="SMART" id="SM00382">
    <property type="entry name" value="AAA"/>
    <property type="match status" value="1"/>
</dbReference>
<dbReference type="SUPFAM" id="SSF52540">
    <property type="entry name" value="P-loop containing nucleoside triphosphate hydrolases"/>
    <property type="match status" value="1"/>
</dbReference>
<dbReference type="PROSITE" id="PS00211">
    <property type="entry name" value="ABC_TRANSPORTER_1"/>
    <property type="match status" value="1"/>
</dbReference>
<dbReference type="PROSITE" id="PS50893">
    <property type="entry name" value="ABC_TRANSPORTER_2"/>
    <property type="match status" value="1"/>
</dbReference>
<dbReference type="PROSITE" id="PS51244">
    <property type="entry name" value="LOLD"/>
    <property type="match status" value="1"/>
</dbReference>
<reference key="1">
    <citation type="journal article" date="1998" name="Nature">
        <title>The genome sequence of Rickettsia prowazekii and the origin of mitochondria.</title>
        <authorList>
            <person name="Andersson S.G.E."/>
            <person name="Zomorodipour A."/>
            <person name="Andersson J.O."/>
            <person name="Sicheritz-Ponten T."/>
            <person name="Alsmark U.C.M."/>
            <person name="Podowski R.M."/>
            <person name="Naeslund A.K."/>
            <person name="Eriksson A.-S."/>
            <person name="Winkler H.H."/>
            <person name="Kurland C.G."/>
        </authorList>
    </citation>
    <scope>NUCLEOTIDE SEQUENCE [LARGE SCALE GENOMIC DNA]</scope>
    <source>
        <strain>Madrid E</strain>
    </source>
</reference>
<gene>
    <name evidence="1" type="primary">lolD</name>
    <name type="ordered locus">RP700</name>
</gene>
<feature type="chain" id="PRO_0000092457" description="Lipoprotein-releasing system ATP-binding protein LolD">
    <location>
        <begin position="1"/>
        <end position="221"/>
    </location>
</feature>
<feature type="domain" description="ABC transporter" evidence="1">
    <location>
        <begin position="8"/>
        <end position="220"/>
    </location>
</feature>
<feature type="binding site" evidence="1">
    <location>
        <begin position="42"/>
        <end position="49"/>
    </location>
    <ligand>
        <name>ATP</name>
        <dbReference type="ChEBI" id="CHEBI:30616"/>
    </ligand>
</feature>
<proteinExistence type="inferred from homology"/>
<name>LOLD_RICPR</name>